<dbReference type="EC" id="6.3.1.1" evidence="1"/>
<dbReference type="EMBL" id="CP000485">
    <property type="protein sequence ID" value="ABK84920.1"/>
    <property type="molecule type" value="Genomic_DNA"/>
</dbReference>
<dbReference type="RefSeq" id="WP_000284908.1">
    <property type="nucleotide sequence ID" value="NC_008600.1"/>
</dbReference>
<dbReference type="SMR" id="A0RCH7"/>
<dbReference type="GeneID" id="69532735"/>
<dbReference type="KEGG" id="btl:BALH_1587"/>
<dbReference type="HOGENOM" id="CLU_071543_0_0_9"/>
<dbReference type="UniPathway" id="UPA00134">
    <property type="reaction ID" value="UER00194"/>
</dbReference>
<dbReference type="GO" id="GO:0005829">
    <property type="term" value="C:cytosol"/>
    <property type="evidence" value="ECO:0007669"/>
    <property type="project" value="TreeGrafter"/>
</dbReference>
<dbReference type="GO" id="GO:0004071">
    <property type="term" value="F:aspartate-ammonia ligase activity"/>
    <property type="evidence" value="ECO:0007669"/>
    <property type="project" value="UniProtKB-UniRule"/>
</dbReference>
<dbReference type="GO" id="GO:0005524">
    <property type="term" value="F:ATP binding"/>
    <property type="evidence" value="ECO:0007669"/>
    <property type="project" value="UniProtKB-UniRule"/>
</dbReference>
<dbReference type="GO" id="GO:0140096">
    <property type="term" value="F:catalytic activity, acting on a protein"/>
    <property type="evidence" value="ECO:0007669"/>
    <property type="project" value="UniProtKB-ARBA"/>
</dbReference>
<dbReference type="GO" id="GO:0016740">
    <property type="term" value="F:transferase activity"/>
    <property type="evidence" value="ECO:0007669"/>
    <property type="project" value="UniProtKB-ARBA"/>
</dbReference>
<dbReference type="GO" id="GO:0070981">
    <property type="term" value="P:L-asparagine biosynthetic process"/>
    <property type="evidence" value="ECO:0007669"/>
    <property type="project" value="UniProtKB-UniRule"/>
</dbReference>
<dbReference type="CDD" id="cd00645">
    <property type="entry name" value="AsnA"/>
    <property type="match status" value="1"/>
</dbReference>
<dbReference type="Gene3D" id="3.30.930.10">
    <property type="entry name" value="Bira Bifunctional Protein, Domain 2"/>
    <property type="match status" value="1"/>
</dbReference>
<dbReference type="HAMAP" id="MF_00555">
    <property type="entry name" value="AsnA"/>
    <property type="match status" value="1"/>
</dbReference>
<dbReference type="InterPro" id="IPR006195">
    <property type="entry name" value="aa-tRNA-synth_II"/>
</dbReference>
<dbReference type="InterPro" id="IPR045864">
    <property type="entry name" value="aa-tRNA-synth_II/BPL/LPL"/>
</dbReference>
<dbReference type="InterPro" id="IPR004618">
    <property type="entry name" value="AsnA"/>
</dbReference>
<dbReference type="NCBIfam" id="TIGR00669">
    <property type="entry name" value="asnA"/>
    <property type="match status" value="1"/>
</dbReference>
<dbReference type="PANTHER" id="PTHR30073">
    <property type="entry name" value="ASPARTATE--AMMONIA LIGASE"/>
    <property type="match status" value="1"/>
</dbReference>
<dbReference type="PANTHER" id="PTHR30073:SF5">
    <property type="entry name" value="ASPARTATE--AMMONIA LIGASE"/>
    <property type="match status" value="1"/>
</dbReference>
<dbReference type="Pfam" id="PF03590">
    <property type="entry name" value="AsnA"/>
    <property type="match status" value="1"/>
</dbReference>
<dbReference type="PIRSF" id="PIRSF001555">
    <property type="entry name" value="Asp_ammon_ligase"/>
    <property type="match status" value="1"/>
</dbReference>
<dbReference type="SUPFAM" id="SSF55681">
    <property type="entry name" value="Class II aaRS and biotin synthetases"/>
    <property type="match status" value="1"/>
</dbReference>
<dbReference type="PROSITE" id="PS50862">
    <property type="entry name" value="AA_TRNA_LIGASE_II"/>
    <property type="match status" value="1"/>
</dbReference>
<gene>
    <name evidence="1" type="primary">asnA</name>
    <name type="ordered locus">BALH_1587</name>
</gene>
<feature type="chain" id="PRO_1000017934" description="Aspartate--ammonia ligase">
    <location>
        <begin position="1"/>
        <end position="327"/>
    </location>
</feature>
<proteinExistence type="inferred from homology"/>
<evidence type="ECO:0000255" key="1">
    <source>
        <dbReference type="HAMAP-Rule" id="MF_00555"/>
    </source>
</evidence>
<organism>
    <name type="scientific">Bacillus thuringiensis (strain Al Hakam)</name>
    <dbReference type="NCBI Taxonomy" id="412694"/>
    <lineage>
        <taxon>Bacteria</taxon>
        <taxon>Bacillati</taxon>
        <taxon>Bacillota</taxon>
        <taxon>Bacilli</taxon>
        <taxon>Bacillales</taxon>
        <taxon>Bacillaceae</taxon>
        <taxon>Bacillus</taxon>
        <taxon>Bacillus cereus group</taxon>
    </lineage>
</organism>
<protein>
    <recommendedName>
        <fullName evidence="1">Aspartate--ammonia ligase</fullName>
        <ecNumber evidence="1">6.3.1.1</ecNumber>
    </recommendedName>
    <alternativeName>
        <fullName evidence="1">Asparagine synthetase A</fullName>
    </alternativeName>
</protein>
<reference key="1">
    <citation type="journal article" date="2007" name="J. Bacteriol.">
        <title>The complete genome sequence of Bacillus thuringiensis Al Hakam.</title>
        <authorList>
            <person name="Challacombe J.F."/>
            <person name="Altherr M.R."/>
            <person name="Xie G."/>
            <person name="Bhotika S.S."/>
            <person name="Brown N."/>
            <person name="Bruce D."/>
            <person name="Campbell C.S."/>
            <person name="Campbell M.L."/>
            <person name="Chen J."/>
            <person name="Chertkov O."/>
            <person name="Cleland C."/>
            <person name="Dimitrijevic M."/>
            <person name="Doggett N.A."/>
            <person name="Fawcett J.J."/>
            <person name="Glavina T."/>
            <person name="Goodwin L.A."/>
            <person name="Green L.D."/>
            <person name="Han C.S."/>
            <person name="Hill K.K."/>
            <person name="Hitchcock P."/>
            <person name="Jackson P.J."/>
            <person name="Keim P."/>
            <person name="Kewalramani A.R."/>
            <person name="Longmire J."/>
            <person name="Lucas S."/>
            <person name="Malfatti S."/>
            <person name="Martinez D."/>
            <person name="McMurry K."/>
            <person name="Meincke L.J."/>
            <person name="Misra M."/>
            <person name="Moseman B.L."/>
            <person name="Mundt M."/>
            <person name="Munk A.C."/>
            <person name="Okinaka R.T."/>
            <person name="Parson-Quintana B."/>
            <person name="Reilly L.P."/>
            <person name="Richardson P."/>
            <person name="Robinson D.L."/>
            <person name="Saunders E."/>
            <person name="Tapia R."/>
            <person name="Tesmer J.G."/>
            <person name="Thayer N."/>
            <person name="Thompson L.S."/>
            <person name="Tice H."/>
            <person name="Ticknor L.O."/>
            <person name="Wills P.L."/>
            <person name="Gilna P."/>
            <person name="Brettin T.S."/>
        </authorList>
    </citation>
    <scope>NUCLEOTIDE SEQUENCE [LARGE SCALE GENOMIC DNA]</scope>
    <source>
        <strain>Al Hakam</strain>
    </source>
</reference>
<accession>A0RCH7</accession>
<keyword id="KW-0028">Amino-acid biosynthesis</keyword>
<keyword id="KW-0061">Asparagine biosynthesis</keyword>
<keyword id="KW-0067">ATP-binding</keyword>
<keyword id="KW-0963">Cytoplasm</keyword>
<keyword id="KW-0436">Ligase</keyword>
<keyword id="KW-0547">Nucleotide-binding</keyword>
<comment type="catalytic activity">
    <reaction evidence="1">
        <text>L-aspartate + NH4(+) + ATP = L-asparagine + AMP + diphosphate + H(+)</text>
        <dbReference type="Rhea" id="RHEA:11372"/>
        <dbReference type="ChEBI" id="CHEBI:15378"/>
        <dbReference type="ChEBI" id="CHEBI:28938"/>
        <dbReference type="ChEBI" id="CHEBI:29991"/>
        <dbReference type="ChEBI" id="CHEBI:30616"/>
        <dbReference type="ChEBI" id="CHEBI:33019"/>
        <dbReference type="ChEBI" id="CHEBI:58048"/>
        <dbReference type="ChEBI" id="CHEBI:456215"/>
        <dbReference type="EC" id="6.3.1.1"/>
    </reaction>
</comment>
<comment type="pathway">
    <text evidence="1">Amino-acid biosynthesis; L-asparagine biosynthesis; L-asparagine from L-aspartate (ammonia route): step 1/1.</text>
</comment>
<comment type="subcellular location">
    <subcellularLocation>
        <location evidence="1">Cytoplasm</location>
    </subcellularLocation>
</comment>
<comment type="similarity">
    <text evidence="1">Belongs to the class-II aminoacyl-tRNA synthetase family. AsnA subfamily.</text>
</comment>
<name>ASNA_BACAH</name>
<sequence>MYQSLMTVRETQIAIKEVKTFFEDQLAKRLELFRVSAPLFVTKKSGLNDHLNGVERPIEFDMLHSGEELEIVHSLAKWKRFALHEYGYEAGEGLYTNMNAIRRDEELDATHSIYVDQWDWEKIVQKEWRTVDYLQKTVLTIYGIFKDLEDHLFEKYPFLGKYLPEEIVFVTSQELEDKYPELTPKDREHAIAKEHGAVFIIGIGDALRSGEKHDGRAADYDDWKLNGDILFWHPVLQSSFELSSMGIRVDSKSLDEQLTKTGEDFKREYDFHKGILEDVLPLTIGGGIGQSRMCMYFLRKAHIGEVQSSVWPDDLREACKKENIHLF</sequence>